<accession>C3ZAH2</accession>
<proteinExistence type="inferred from homology"/>
<keyword id="KW-0028">Amino-acid biosynthesis</keyword>
<keyword id="KW-0963">Cytoplasm</keyword>
<keyword id="KW-0223">Dioxygenase</keyword>
<keyword id="KW-0408">Iron</keyword>
<keyword id="KW-0479">Metal-binding</keyword>
<keyword id="KW-0486">Methionine biosynthesis</keyword>
<keyword id="KW-0533">Nickel</keyword>
<keyword id="KW-0539">Nucleus</keyword>
<keyword id="KW-0560">Oxidoreductase</keyword>
<keyword id="KW-1185">Reference proteome</keyword>
<organism>
    <name type="scientific">Branchiostoma floridae</name>
    <name type="common">Florida lancelet</name>
    <name type="synonym">Amphioxus</name>
    <dbReference type="NCBI Taxonomy" id="7739"/>
    <lineage>
        <taxon>Eukaryota</taxon>
        <taxon>Metazoa</taxon>
        <taxon>Chordata</taxon>
        <taxon>Cephalochordata</taxon>
        <taxon>Leptocardii</taxon>
        <taxon>Amphioxiformes</taxon>
        <taxon>Branchiostomatidae</taxon>
        <taxon>Branchiostoma</taxon>
    </lineage>
</organism>
<gene>
    <name type="ORF">BRAFLDRAFT_119977</name>
</gene>
<name>MTND_BRAFL</name>
<comment type="function">
    <text evidence="1">Catalyzes 2 different reactions between oxygen and the acireductone 1,2-dihydroxy-3-keto-5-methylthiopentene (DHK-MTPene) depending upon the metal bound in the active site. Fe-containing acireductone dioxygenase (Fe-ARD) produces formate and 2-keto-4-methylthiobutyrate (KMTB), the alpha-ketoacid precursor of methionine in the methionine recycle pathway. Ni-containing acireductone dioxygenase (Ni-ARD) produces methylthiopropionate, carbon monoxide and formate, and does not lie on the methionine recycle pathway.</text>
</comment>
<comment type="catalytic activity">
    <reaction evidence="1">
        <text>1,2-dihydroxy-5-(methylsulfanyl)pent-1-en-3-one + O2 = 4-methylsulfanyl-2-oxobutanoate + formate + 2 H(+)</text>
        <dbReference type="Rhea" id="RHEA:24504"/>
        <dbReference type="ChEBI" id="CHEBI:15378"/>
        <dbReference type="ChEBI" id="CHEBI:15379"/>
        <dbReference type="ChEBI" id="CHEBI:15740"/>
        <dbReference type="ChEBI" id="CHEBI:16723"/>
        <dbReference type="ChEBI" id="CHEBI:49252"/>
        <dbReference type="EC" id="1.13.11.54"/>
    </reaction>
</comment>
<comment type="catalytic activity">
    <reaction evidence="1">
        <text>1,2-dihydroxy-5-(methylsulfanyl)pent-1-en-3-one + O2 = 3-(methylsulfanyl)propanoate + CO + formate + 2 H(+)</text>
        <dbReference type="Rhea" id="RHEA:14161"/>
        <dbReference type="ChEBI" id="CHEBI:15378"/>
        <dbReference type="ChEBI" id="CHEBI:15379"/>
        <dbReference type="ChEBI" id="CHEBI:15740"/>
        <dbReference type="ChEBI" id="CHEBI:17245"/>
        <dbReference type="ChEBI" id="CHEBI:49016"/>
        <dbReference type="ChEBI" id="CHEBI:49252"/>
        <dbReference type="EC" id="1.13.11.53"/>
    </reaction>
</comment>
<comment type="cofactor">
    <cofactor evidence="1">
        <name>Fe(2+)</name>
        <dbReference type="ChEBI" id="CHEBI:29033"/>
    </cofactor>
    <cofactor evidence="1">
        <name>Ni(2+)</name>
        <dbReference type="ChEBI" id="CHEBI:49786"/>
    </cofactor>
    <text evidence="1">Binds either 1 Fe or Ni cation per monomer. Iron-binding promotes an acireductone dioxygenase reaction producing 2-keto-4-methylthiobutyrate, while nickel-binding promotes an acireductone dioxygenase reaction producing 3-(methylsulfanyl)propanoate.</text>
</comment>
<comment type="pathway">
    <text evidence="1">Amino-acid biosynthesis; L-methionine biosynthesis via salvage pathway; L-methionine from S-methyl-5-thio-alpha-D-ribose 1-phosphate: step 5/6.</text>
</comment>
<comment type="subcellular location">
    <subcellularLocation>
        <location evidence="1">Cytoplasm</location>
    </subcellularLocation>
    <subcellularLocation>
        <location evidence="1">Nucleus</location>
    </subcellularLocation>
</comment>
<comment type="similarity">
    <text evidence="1">Belongs to the acireductone dioxygenase (ARD) family.</text>
</comment>
<feature type="chain" id="PRO_0000414330" description="Acireductone dioxygenase">
    <location>
        <begin position="1"/>
        <end position="177"/>
    </location>
</feature>
<feature type="region of interest" description="Disordered" evidence="2">
    <location>
        <begin position="1"/>
        <end position="23"/>
    </location>
</feature>
<feature type="binding site" evidence="1">
    <location>
        <position position="86"/>
    </location>
    <ligand>
        <name>Fe(2+)</name>
        <dbReference type="ChEBI" id="CHEBI:29033"/>
        <note>for iron-dependent acireductone dioxygenase activity</note>
    </ligand>
</feature>
<feature type="binding site" evidence="1">
    <location>
        <position position="86"/>
    </location>
    <ligand>
        <name>Ni(2+)</name>
        <dbReference type="ChEBI" id="CHEBI:49786"/>
        <note>for nickel-dependent acireductone dioxygenase activity</note>
    </ligand>
</feature>
<feature type="binding site" evidence="1">
    <location>
        <position position="88"/>
    </location>
    <ligand>
        <name>Fe(2+)</name>
        <dbReference type="ChEBI" id="CHEBI:29033"/>
        <note>for iron-dependent acireductone dioxygenase activity</note>
    </ligand>
</feature>
<feature type="binding site" evidence="1">
    <location>
        <position position="88"/>
    </location>
    <ligand>
        <name>Ni(2+)</name>
        <dbReference type="ChEBI" id="CHEBI:49786"/>
        <note>for nickel-dependent acireductone dioxygenase activity</note>
    </ligand>
</feature>
<feature type="binding site" evidence="1">
    <location>
        <position position="92"/>
    </location>
    <ligand>
        <name>Fe(2+)</name>
        <dbReference type="ChEBI" id="CHEBI:29033"/>
        <note>for iron-dependent acireductone dioxygenase activity</note>
    </ligand>
</feature>
<feature type="binding site" evidence="1">
    <location>
        <position position="92"/>
    </location>
    <ligand>
        <name>Ni(2+)</name>
        <dbReference type="ChEBI" id="CHEBI:49786"/>
        <note>for nickel-dependent acireductone dioxygenase activity</note>
    </ligand>
</feature>
<feature type="binding site" evidence="1">
    <location>
        <position position="131"/>
    </location>
    <ligand>
        <name>Fe(2+)</name>
        <dbReference type="ChEBI" id="CHEBI:29033"/>
        <note>for iron-dependent acireductone dioxygenase activity</note>
    </ligand>
</feature>
<feature type="binding site" evidence="1">
    <location>
        <position position="131"/>
    </location>
    <ligand>
        <name>Ni(2+)</name>
        <dbReference type="ChEBI" id="CHEBI:49786"/>
        <note>for nickel-dependent acireductone dioxygenase activity</note>
    </ligand>
</feature>
<sequence>MVRAWYMDDSDADQRAPHMTDPPQPVELDQLKNIGVLYWQLSGNEDDETLAGIRKDRGYSYNDLIEITPEKLPNYEQKIKTFFEEHLHLDEEIRYCVGGSGYFDVRDKGDKWIRIEMEKGDLIVLPAGIYHRFTLDEKNYIKAMRLFVGEPVWTPYNRPADDKDARKEYLKTMGLAA</sequence>
<evidence type="ECO:0000255" key="1">
    <source>
        <dbReference type="HAMAP-Rule" id="MF_03154"/>
    </source>
</evidence>
<evidence type="ECO:0000256" key="2">
    <source>
        <dbReference type="SAM" id="MobiDB-lite"/>
    </source>
</evidence>
<dbReference type="EC" id="1.13.11.54" evidence="1"/>
<dbReference type="EC" id="1.13.11.53" evidence="1"/>
<dbReference type="EMBL" id="GG666602">
    <property type="protein sequence ID" value="EEN50375.1"/>
    <property type="molecule type" value="Genomic_DNA"/>
</dbReference>
<dbReference type="RefSeq" id="XP_002594364.1">
    <property type="nucleotide sequence ID" value="XM_002594318.1"/>
</dbReference>
<dbReference type="SMR" id="C3ZAH2"/>
<dbReference type="FunCoup" id="C3ZAH2">
    <property type="interactions" value="503"/>
</dbReference>
<dbReference type="STRING" id="7739.C3ZAH2"/>
<dbReference type="eggNOG" id="KOG2107">
    <property type="taxonomic scope" value="Eukaryota"/>
</dbReference>
<dbReference type="InParanoid" id="C3ZAH2"/>
<dbReference type="UniPathway" id="UPA00904">
    <property type="reaction ID" value="UER00878"/>
</dbReference>
<dbReference type="Proteomes" id="UP000001554">
    <property type="component" value="Unplaced"/>
</dbReference>
<dbReference type="GO" id="GO:0005737">
    <property type="term" value="C:cytoplasm"/>
    <property type="evidence" value="ECO:0007669"/>
    <property type="project" value="UniProtKB-SubCell"/>
</dbReference>
<dbReference type="GO" id="GO:0005634">
    <property type="term" value="C:nucleus"/>
    <property type="evidence" value="ECO:0007669"/>
    <property type="project" value="UniProtKB-SubCell"/>
</dbReference>
<dbReference type="GO" id="GO:0010308">
    <property type="term" value="F:acireductone dioxygenase (Ni2+-requiring) activity"/>
    <property type="evidence" value="ECO:0007669"/>
    <property type="project" value="UniProtKB-UniRule"/>
</dbReference>
<dbReference type="GO" id="GO:0010309">
    <property type="term" value="F:acireductone dioxygenase [iron(II)-requiring] activity"/>
    <property type="evidence" value="ECO:0000318"/>
    <property type="project" value="GO_Central"/>
</dbReference>
<dbReference type="GO" id="GO:0005506">
    <property type="term" value="F:iron ion binding"/>
    <property type="evidence" value="ECO:0007669"/>
    <property type="project" value="UniProtKB-UniRule"/>
</dbReference>
<dbReference type="GO" id="GO:0016151">
    <property type="term" value="F:nickel cation binding"/>
    <property type="evidence" value="ECO:0007669"/>
    <property type="project" value="UniProtKB-UniRule"/>
</dbReference>
<dbReference type="GO" id="GO:0019509">
    <property type="term" value="P:L-methionine salvage from methylthioadenosine"/>
    <property type="evidence" value="ECO:0007669"/>
    <property type="project" value="UniProtKB-UniRule"/>
</dbReference>
<dbReference type="GO" id="GO:0006555">
    <property type="term" value="P:methionine metabolic process"/>
    <property type="evidence" value="ECO:0000318"/>
    <property type="project" value="GO_Central"/>
</dbReference>
<dbReference type="CDD" id="cd02232">
    <property type="entry name" value="cupin_ARD"/>
    <property type="match status" value="1"/>
</dbReference>
<dbReference type="FunFam" id="2.60.120.10:FF:000031">
    <property type="entry name" value="1,2-dihydroxy-3-keto-5-methylthiopentene dioxygenase"/>
    <property type="match status" value="1"/>
</dbReference>
<dbReference type="Gene3D" id="2.60.120.10">
    <property type="entry name" value="Jelly Rolls"/>
    <property type="match status" value="1"/>
</dbReference>
<dbReference type="HAMAP" id="MF_03154">
    <property type="entry name" value="Salvage_MtnD_euk"/>
    <property type="match status" value="1"/>
</dbReference>
<dbReference type="InterPro" id="IPR004313">
    <property type="entry name" value="ARD"/>
</dbReference>
<dbReference type="InterPro" id="IPR027496">
    <property type="entry name" value="ARD_euk"/>
</dbReference>
<dbReference type="InterPro" id="IPR014710">
    <property type="entry name" value="RmlC-like_jellyroll"/>
</dbReference>
<dbReference type="InterPro" id="IPR011051">
    <property type="entry name" value="RmlC_Cupin_sf"/>
</dbReference>
<dbReference type="PANTHER" id="PTHR23418">
    <property type="entry name" value="ACIREDUCTONE DIOXYGENASE"/>
    <property type="match status" value="1"/>
</dbReference>
<dbReference type="PANTHER" id="PTHR23418:SF0">
    <property type="entry name" value="ACIREDUCTONE DIOXYGENASE"/>
    <property type="match status" value="1"/>
</dbReference>
<dbReference type="Pfam" id="PF03079">
    <property type="entry name" value="ARD"/>
    <property type="match status" value="1"/>
</dbReference>
<dbReference type="SUPFAM" id="SSF51182">
    <property type="entry name" value="RmlC-like cupins"/>
    <property type="match status" value="1"/>
</dbReference>
<reference key="1">
    <citation type="journal article" date="2008" name="Nature">
        <title>The amphioxus genome and the evolution of the chordate karyotype.</title>
        <authorList>
            <person name="Putnam N.H."/>
            <person name="Butts T."/>
            <person name="Ferrier D.E.K."/>
            <person name="Furlong R.F."/>
            <person name="Hellsten U."/>
            <person name="Kawashima T."/>
            <person name="Robinson-Rechavi M."/>
            <person name="Shoguchi E."/>
            <person name="Terry A."/>
            <person name="Yu J.-K."/>
            <person name="Benito-Gutierrez E.L."/>
            <person name="Dubchak I."/>
            <person name="Garcia-Fernandez J."/>
            <person name="Gibson-Brown J.J."/>
            <person name="Grigoriev I.V."/>
            <person name="Horton A.C."/>
            <person name="de Jong P.J."/>
            <person name="Jurka J."/>
            <person name="Kapitonov V.V."/>
            <person name="Kohara Y."/>
            <person name="Kuroki Y."/>
            <person name="Lindquist E."/>
            <person name="Lucas S."/>
            <person name="Osoegawa K."/>
            <person name="Pennacchio L.A."/>
            <person name="Salamov A.A."/>
            <person name="Satou Y."/>
            <person name="Sauka-Spengler T."/>
            <person name="Schmutz J."/>
            <person name="Shin-I T."/>
            <person name="Toyoda A."/>
            <person name="Bronner-Fraser M."/>
            <person name="Fujiyama A."/>
            <person name="Holland L.Z."/>
            <person name="Holland P.W.H."/>
            <person name="Satoh N."/>
            <person name="Rokhsar D.S."/>
        </authorList>
    </citation>
    <scope>NUCLEOTIDE SEQUENCE [LARGE SCALE GENOMIC DNA]</scope>
    <source>
        <strain>S238N-H82</strain>
        <tissue>Testis</tissue>
    </source>
</reference>
<protein>
    <recommendedName>
        <fullName evidence="1">Acireductone dioxygenase</fullName>
    </recommendedName>
    <alternativeName>
        <fullName evidence="1">Acireductone dioxygenase (Fe(2+)-requiring)</fullName>
        <shortName evidence="1">ARD'</shortName>
        <shortName evidence="1">Fe-ARD</shortName>
        <ecNumber evidence="1">1.13.11.54</ecNumber>
    </alternativeName>
    <alternativeName>
        <fullName evidence="1">Acireductone dioxygenase (Ni(2+)-requiring)</fullName>
        <shortName evidence="1">ARD</shortName>
        <shortName evidence="1">Ni-ARD</shortName>
        <ecNumber evidence="1">1.13.11.53</ecNumber>
    </alternativeName>
</protein>